<protein>
    <recommendedName>
        <fullName evidence="1">UDP-N-acetylglucosamine 1-carboxyvinyltransferase 1</fullName>
        <ecNumber evidence="1">2.5.1.7</ecNumber>
    </recommendedName>
    <alternativeName>
        <fullName evidence="1">Enoylpyruvate transferase 1</fullName>
    </alternativeName>
    <alternativeName>
        <fullName evidence="1">UDP-N-acetylglucosamine enolpyruvyl transferase 1</fullName>
        <shortName evidence="1">EPT 1</shortName>
    </alternativeName>
</protein>
<reference key="1">
    <citation type="journal article" date="2005" name="PLoS Genet.">
        <title>Life in hot carbon monoxide: the complete genome sequence of Carboxydothermus hydrogenoformans Z-2901.</title>
        <authorList>
            <person name="Wu M."/>
            <person name="Ren Q."/>
            <person name="Durkin A.S."/>
            <person name="Daugherty S.C."/>
            <person name="Brinkac L.M."/>
            <person name="Dodson R.J."/>
            <person name="Madupu R."/>
            <person name="Sullivan S.A."/>
            <person name="Kolonay J.F."/>
            <person name="Nelson W.C."/>
            <person name="Tallon L.J."/>
            <person name="Jones K.M."/>
            <person name="Ulrich L.E."/>
            <person name="Gonzalez J.M."/>
            <person name="Zhulin I.B."/>
            <person name="Robb F.T."/>
            <person name="Eisen J.A."/>
        </authorList>
    </citation>
    <scope>NUCLEOTIDE SEQUENCE [LARGE SCALE GENOMIC DNA]</scope>
    <source>
        <strain>ATCC BAA-161 / DSM 6008 / Z-2901</strain>
    </source>
</reference>
<gene>
    <name evidence="1" type="primary">murA1</name>
    <name type="synonym">murAB</name>
    <name type="ordered locus">CHY_2066</name>
</gene>
<accession>Q3AAE9</accession>
<comment type="function">
    <text evidence="1">Cell wall formation. Adds enolpyruvyl to UDP-N-acetylglucosamine.</text>
</comment>
<comment type="catalytic activity">
    <reaction evidence="1">
        <text>phosphoenolpyruvate + UDP-N-acetyl-alpha-D-glucosamine = UDP-N-acetyl-3-O-(1-carboxyvinyl)-alpha-D-glucosamine + phosphate</text>
        <dbReference type="Rhea" id="RHEA:18681"/>
        <dbReference type="ChEBI" id="CHEBI:43474"/>
        <dbReference type="ChEBI" id="CHEBI:57705"/>
        <dbReference type="ChEBI" id="CHEBI:58702"/>
        <dbReference type="ChEBI" id="CHEBI:68483"/>
        <dbReference type="EC" id="2.5.1.7"/>
    </reaction>
</comment>
<comment type="pathway">
    <text evidence="1">Cell wall biogenesis; peptidoglycan biosynthesis.</text>
</comment>
<comment type="subcellular location">
    <subcellularLocation>
        <location evidence="1">Cytoplasm</location>
    </subcellularLocation>
</comment>
<comment type="similarity">
    <text evidence="1">Belongs to the EPSP synthase family. MurA subfamily.</text>
</comment>
<sequence length="420" mass="45378">MEKFFIVGSHGLKGEIKVSGAKNSALPIIAATLLTREPCVLENIPKLEDVNIMLSILKRLGSKVEFGQLLTIQNNRINELIIPEELARKIRASNLFLGPLVARFQEGVVPLPGGCNIGNRPMDLHLKGLRLMGAEVEEKSGFIRARAKKLKGAEIHLDFPSVGATENLMMAAALAQGTTIIRNAAREPEIVDLQNFLNLMGAKVKGAGTDIIKITGVNQLKGVTHKIIPDRIEAGTHMVMAAATQSDIIISGVIPEHLEAVMAKLKEAGALITSGGDWVRVTGKSIIKPVDIKTMPYPGFPTDMQPQILALLTLAQGTSIISEGVFDNRFKHVEELRRMGADIRLESRIAVIKGVPKLTGASVIAHDLRAAAALVIAGLAAEGMTVLEGIKNLDRGYENLDLKYQLIGAQIKRVNGEEKY</sequence>
<keyword id="KW-0131">Cell cycle</keyword>
<keyword id="KW-0132">Cell division</keyword>
<keyword id="KW-0133">Cell shape</keyword>
<keyword id="KW-0961">Cell wall biogenesis/degradation</keyword>
<keyword id="KW-0963">Cytoplasm</keyword>
<keyword id="KW-0573">Peptidoglycan synthesis</keyword>
<keyword id="KW-0670">Pyruvate</keyword>
<keyword id="KW-1185">Reference proteome</keyword>
<keyword id="KW-0808">Transferase</keyword>
<name>MURA1_CARHZ</name>
<feature type="chain" id="PRO_0000231186" description="UDP-N-acetylglucosamine 1-carboxyvinyltransferase 1">
    <location>
        <begin position="1"/>
        <end position="420"/>
    </location>
</feature>
<feature type="active site" description="Proton donor" evidence="1">
    <location>
        <position position="115"/>
    </location>
</feature>
<feature type="binding site" evidence="1">
    <location>
        <begin position="22"/>
        <end position="23"/>
    </location>
    <ligand>
        <name>phosphoenolpyruvate</name>
        <dbReference type="ChEBI" id="CHEBI:58702"/>
    </ligand>
</feature>
<feature type="binding site" evidence="1">
    <location>
        <position position="91"/>
    </location>
    <ligand>
        <name>UDP-N-acetyl-alpha-D-glucosamine</name>
        <dbReference type="ChEBI" id="CHEBI:57705"/>
    </ligand>
</feature>
<feature type="binding site" evidence="1">
    <location>
        <begin position="120"/>
        <end position="124"/>
    </location>
    <ligand>
        <name>UDP-N-acetyl-alpha-D-glucosamine</name>
        <dbReference type="ChEBI" id="CHEBI:57705"/>
    </ligand>
</feature>
<feature type="binding site" evidence="1">
    <location>
        <position position="303"/>
    </location>
    <ligand>
        <name>UDP-N-acetyl-alpha-D-glucosamine</name>
        <dbReference type="ChEBI" id="CHEBI:57705"/>
    </ligand>
</feature>
<feature type="binding site" evidence="1">
    <location>
        <position position="325"/>
    </location>
    <ligand>
        <name>UDP-N-acetyl-alpha-D-glucosamine</name>
        <dbReference type="ChEBI" id="CHEBI:57705"/>
    </ligand>
</feature>
<feature type="modified residue" description="2-(S-cysteinyl)pyruvic acid O-phosphothioketal" evidence="1">
    <location>
        <position position="115"/>
    </location>
</feature>
<dbReference type="EC" id="2.5.1.7" evidence="1"/>
<dbReference type="EMBL" id="CP000141">
    <property type="protein sequence ID" value="ABB14857.1"/>
    <property type="molecule type" value="Genomic_DNA"/>
</dbReference>
<dbReference type="SMR" id="Q3AAE9"/>
<dbReference type="STRING" id="246194.CHY_2066"/>
<dbReference type="KEGG" id="chy:CHY_2066"/>
<dbReference type="eggNOG" id="COG0766">
    <property type="taxonomic scope" value="Bacteria"/>
</dbReference>
<dbReference type="HOGENOM" id="CLU_027387_0_0_9"/>
<dbReference type="InParanoid" id="Q3AAE9"/>
<dbReference type="OrthoDB" id="9803760at2"/>
<dbReference type="UniPathway" id="UPA00219"/>
<dbReference type="Proteomes" id="UP000002706">
    <property type="component" value="Chromosome"/>
</dbReference>
<dbReference type="GO" id="GO:0005737">
    <property type="term" value="C:cytoplasm"/>
    <property type="evidence" value="ECO:0007669"/>
    <property type="project" value="UniProtKB-SubCell"/>
</dbReference>
<dbReference type="GO" id="GO:0008760">
    <property type="term" value="F:UDP-N-acetylglucosamine 1-carboxyvinyltransferase activity"/>
    <property type="evidence" value="ECO:0007669"/>
    <property type="project" value="UniProtKB-UniRule"/>
</dbReference>
<dbReference type="GO" id="GO:0051301">
    <property type="term" value="P:cell division"/>
    <property type="evidence" value="ECO:0007669"/>
    <property type="project" value="UniProtKB-KW"/>
</dbReference>
<dbReference type="GO" id="GO:0071555">
    <property type="term" value="P:cell wall organization"/>
    <property type="evidence" value="ECO:0007669"/>
    <property type="project" value="UniProtKB-KW"/>
</dbReference>
<dbReference type="GO" id="GO:0009252">
    <property type="term" value="P:peptidoglycan biosynthetic process"/>
    <property type="evidence" value="ECO:0007669"/>
    <property type="project" value="UniProtKB-UniRule"/>
</dbReference>
<dbReference type="GO" id="GO:0008360">
    <property type="term" value="P:regulation of cell shape"/>
    <property type="evidence" value="ECO:0007669"/>
    <property type="project" value="UniProtKB-KW"/>
</dbReference>
<dbReference type="GO" id="GO:0019277">
    <property type="term" value="P:UDP-N-acetylgalactosamine biosynthetic process"/>
    <property type="evidence" value="ECO:0007669"/>
    <property type="project" value="InterPro"/>
</dbReference>
<dbReference type="CDD" id="cd01555">
    <property type="entry name" value="UdpNAET"/>
    <property type="match status" value="1"/>
</dbReference>
<dbReference type="FunFam" id="3.65.10.10:FF:000001">
    <property type="entry name" value="UDP-N-acetylglucosamine 1-carboxyvinyltransferase"/>
    <property type="match status" value="1"/>
</dbReference>
<dbReference type="Gene3D" id="3.65.10.10">
    <property type="entry name" value="Enolpyruvate transferase domain"/>
    <property type="match status" value="2"/>
</dbReference>
<dbReference type="HAMAP" id="MF_00111">
    <property type="entry name" value="MurA"/>
    <property type="match status" value="1"/>
</dbReference>
<dbReference type="InterPro" id="IPR001986">
    <property type="entry name" value="Enolpyruvate_Tfrase_dom"/>
</dbReference>
<dbReference type="InterPro" id="IPR036968">
    <property type="entry name" value="Enolpyruvate_Tfrase_sf"/>
</dbReference>
<dbReference type="InterPro" id="IPR050068">
    <property type="entry name" value="MurA_subfamily"/>
</dbReference>
<dbReference type="InterPro" id="IPR013792">
    <property type="entry name" value="RNA3'P_cycl/enolpyr_Trfase_a/b"/>
</dbReference>
<dbReference type="InterPro" id="IPR005750">
    <property type="entry name" value="UDP_GlcNAc_COvinyl_MurA"/>
</dbReference>
<dbReference type="NCBIfam" id="TIGR01072">
    <property type="entry name" value="murA"/>
    <property type="match status" value="1"/>
</dbReference>
<dbReference type="NCBIfam" id="NF006873">
    <property type="entry name" value="PRK09369.1"/>
    <property type="match status" value="1"/>
</dbReference>
<dbReference type="PANTHER" id="PTHR43783">
    <property type="entry name" value="UDP-N-ACETYLGLUCOSAMINE 1-CARBOXYVINYLTRANSFERASE"/>
    <property type="match status" value="1"/>
</dbReference>
<dbReference type="PANTHER" id="PTHR43783:SF1">
    <property type="entry name" value="UDP-N-ACETYLGLUCOSAMINE 1-CARBOXYVINYLTRANSFERASE"/>
    <property type="match status" value="1"/>
</dbReference>
<dbReference type="Pfam" id="PF00275">
    <property type="entry name" value="EPSP_synthase"/>
    <property type="match status" value="1"/>
</dbReference>
<dbReference type="SUPFAM" id="SSF55205">
    <property type="entry name" value="EPT/RTPC-like"/>
    <property type="match status" value="1"/>
</dbReference>
<evidence type="ECO:0000255" key="1">
    <source>
        <dbReference type="HAMAP-Rule" id="MF_00111"/>
    </source>
</evidence>
<organism>
    <name type="scientific">Carboxydothermus hydrogenoformans (strain ATCC BAA-161 / DSM 6008 / Z-2901)</name>
    <dbReference type="NCBI Taxonomy" id="246194"/>
    <lineage>
        <taxon>Bacteria</taxon>
        <taxon>Bacillati</taxon>
        <taxon>Bacillota</taxon>
        <taxon>Clostridia</taxon>
        <taxon>Thermoanaerobacterales</taxon>
        <taxon>Thermoanaerobacteraceae</taxon>
        <taxon>Carboxydothermus</taxon>
    </lineage>
</organism>
<proteinExistence type="inferred from homology"/>